<feature type="chain" id="PRO_0000100062" description="Dehydrin COR410">
    <location>
        <begin position="1"/>
        <end position="262"/>
    </location>
</feature>
<feature type="repeat" description="1">
    <location>
        <begin position="106"/>
        <end position="126"/>
    </location>
</feature>
<feature type="repeat" description="2">
    <location>
        <begin position="173"/>
        <end position="193"/>
    </location>
</feature>
<feature type="repeat" description="3">
    <location>
        <begin position="225"/>
        <end position="245"/>
    </location>
</feature>
<feature type="region of interest" description="Disordered" evidence="1">
    <location>
        <begin position="1"/>
        <end position="153"/>
    </location>
</feature>
<feature type="region of interest" description="3 X 21 AA repeats, Lys-rich">
    <location>
        <begin position="106"/>
        <end position="245"/>
    </location>
</feature>
<feature type="region of interest" description="Disordered" evidence="1">
    <location>
        <begin position="187"/>
        <end position="262"/>
    </location>
</feature>
<feature type="compositionally biased region" description="Basic and acidic residues" evidence="1">
    <location>
        <begin position="34"/>
        <end position="45"/>
    </location>
</feature>
<feature type="compositionally biased region" description="Basic and acidic residues" evidence="1">
    <location>
        <begin position="53"/>
        <end position="74"/>
    </location>
</feature>
<feature type="compositionally biased region" description="Acidic residues" evidence="1">
    <location>
        <begin position="89"/>
        <end position="101"/>
    </location>
</feature>
<feature type="compositionally biased region" description="Basic and acidic residues" evidence="1">
    <location>
        <begin position="113"/>
        <end position="130"/>
    </location>
</feature>
<feature type="compositionally biased region" description="Basic and acidic residues" evidence="1">
    <location>
        <begin position="187"/>
        <end position="196"/>
    </location>
</feature>
<feature type="compositionally biased region" description="Low complexity" evidence="1">
    <location>
        <begin position="197"/>
        <end position="209"/>
    </location>
</feature>
<feature type="compositionally biased region" description="Basic and acidic residues" evidence="1">
    <location>
        <begin position="244"/>
        <end position="262"/>
    </location>
</feature>
<gene>
    <name type="primary">COR410</name>
</gene>
<dbReference type="EMBL" id="L29152">
    <property type="protein sequence ID" value="AAA20189.1"/>
    <property type="molecule type" value="mRNA"/>
</dbReference>
<dbReference type="PIR" id="S43953">
    <property type="entry name" value="S43953"/>
</dbReference>
<dbReference type="STRING" id="4565.P46524"/>
<dbReference type="eggNOG" id="ENOG502RZ4N">
    <property type="taxonomic scope" value="Eukaryota"/>
</dbReference>
<dbReference type="Proteomes" id="UP000019116">
    <property type="component" value="Unplaced"/>
</dbReference>
<dbReference type="ExpressionAtlas" id="P46524">
    <property type="expression patterns" value="baseline and differential"/>
</dbReference>
<dbReference type="GO" id="GO:0016020">
    <property type="term" value="C:membrane"/>
    <property type="evidence" value="ECO:0000318"/>
    <property type="project" value="GO_Central"/>
</dbReference>
<dbReference type="GO" id="GO:0009631">
    <property type="term" value="P:cold acclimation"/>
    <property type="evidence" value="ECO:0000318"/>
    <property type="project" value="GO_Central"/>
</dbReference>
<dbReference type="GO" id="GO:0009737">
    <property type="term" value="P:response to abscisic acid"/>
    <property type="evidence" value="ECO:0000318"/>
    <property type="project" value="GO_Central"/>
</dbReference>
<dbReference type="GO" id="GO:0009414">
    <property type="term" value="P:response to water deprivation"/>
    <property type="evidence" value="ECO:0000318"/>
    <property type="project" value="GO_Central"/>
</dbReference>
<dbReference type="InterPro" id="IPR000167">
    <property type="entry name" value="Dehydrin"/>
</dbReference>
<dbReference type="InterPro" id="IPR030513">
    <property type="entry name" value="Dehydrin_CS"/>
</dbReference>
<dbReference type="PANTHER" id="PTHR33346:SF2">
    <property type="entry name" value="DEHYDRIN ERD14"/>
    <property type="match status" value="1"/>
</dbReference>
<dbReference type="PANTHER" id="PTHR33346">
    <property type="entry name" value="DEHYDRIN XERO 2-RELATED"/>
    <property type="match status" value="1"/>
</dbReference>
<dbReference type="Pfam" id="PF00257">
    <property type="entry name" value="Dehydrin"/>
    <property type="match status" value="2"/>
</dbReference>
<dbReference type="PROSITE" id="PS00315">
    <property type="entry name" value="DEHYDRIN_1"/>
    <property type="match status" value="1"/>
</dbReference>
<dbReference type="PROSITE" id="PS00823">
    <property type="entry name" value="DEHYDRIN_2"/>
    <property type="match status" value="1"/>
</dbReference>
<keyword id="KW-1185">Reference proteome</keyword>
<keyword id="KW-0677">Repeat</keyword>
<accession>P46524</accession>
<comment type="tissue specificity">
    <text>Expressed in roots, crown and leaves during cold acclimation.</text>
</comment>
<comment type="induction">
    <text>In freezing-tolerant gramineae, by cold temperatures. Water-stress induces the expression to a similar extent in all species tested, abscisic acid (ABA) to a much lesser extent.</text>
</comment>
<name>CO410_WHEAT</name>
<reference key="1">
    <citation type="journal article" date="1994" name="FEBS Lett.">
        <title>Differential expression of a gene encoding an acidic dehydrin in chilling sensitive and freezing tolerant gramineae species.</title>
        <authorList>
            <person name="Danyluk J."/>
            <person name="Houde M."/>
            <person name="Rassart E."/>
            <person name="Sarhan F."/>
        </authorList>
    </citation>
    <scope>NUCLEOTIDE SEQUENCE [MRNA]</scope>
    <source>
        <strain>cv. Norstar</strain>
    </source>
</reference>
<sequence>MEDERSTQSYQGGEAAEQVEVTDRGLLGNLLGKKKAEEDKEKEEELVTGMEKVSVEEPEVKKEEHEDGEKKETLFSKLHRSSSSSSSSSDEEEEEVIDDNGEVIKRKKKKGLKEKLQGKLPGHKDTEGEHVTGLPAPAAPASVQTHGGHHDTDVVVEKIDGDVKTEAAPAVPEEEKKGFLEKIKEKLPGGHKKPEDAAAVPVTHAAPAPVHAPVPAPEEVSSPDAKEKKGLLGKIMDKLPGYHKTGEEDKAAAATGEHKPSA</sequence>
<proteinExistence type="evidence at transcript level"/>
<evidence type="ECO:0000256" key="1">
    <source>
        <dbReference type="SAM" id="MobiDB-lite"/>
    </source>
</evidence>
<protein>
    <recommendedName>
        <fullName>Dehydrin COR410</fullName>
    </recommendedName>
    <alternativeName>
        <fullName>Cold-induced COR410 protein</fullName>
    </alternativeName>
</protein>
<organism>
    <name type="scientific">Triticum aestivum</name>
    <name type="common">Wheat</name>
    <dbReference type="NCBI Taxonomy" id="4565"/>
    <lineage>
        <taxon>Eukaryota</taxon>
        <taxon>Viridiplantae</taxon>
        <taxon>Streptophyta</taxon>
        <taxon>Embryophyta</taxon>
        <taxon>Tracheophyta</taxon>
        <taxon>Spermatophyta</taxon>
        <taxon>Magnoliopsida</taxon>
        <taxon>Liliopsida</taxon>
        <taxon>Poales</taxon>
        <taxon>Poaceae</taxon>
        <taxon>BOP clade</taxon>
        <taxon>Pooideae</taxon>
        <taxon>Triticodae</taxon>
        <taxon>Triticeae</taxon>
        <taxon>Triticinae</taxon>
        <taxon>Triticum</taxon>
    </lineage>
</organism>